<protein>
    <recommendedName>
        <fullName>Cytochrome P450 3A56</fullName>
        <ecNumber>1.14.14.1</ecNumber>
    </recommendedName>
    <alternativeName>
        <fullName>CYPIIIA56</fullName>
    </alternativeName>
</protein>
<sequence length="496" mass="57054">MGYFYLTAETWTLLVAFVTLLLIYAYWPYGTFKRLGISGPKPVPFFGTMLHYRRGFFTFDEECKKKYGKVWGIYDGRQPVLCVTDPEIIKAVLVKECLSFFTNRRNFHLNGPLYDALSVAEDDQWKRIRSVLSPSFTSGRLKEMFEIMKNHSANLIRSMKKKADKDEPLDLKEFFGSYSMDVVTSTAFSVDIDSLNNPSDPFVTNIKKMLKFDFLNPLFLAVAFFPFLGPILEKFELSFFPKSVTDFFYASLEKIKSNREASQQKSRVDFLQLMIDSQKNSGAQQDKSLTDHEILSQSMIFIFAGYETSSSSLTFLAYNLATNPEVMKKLQEEIDATFPNKAPVHYQPLMEMEYLDCVINESLRLFPIAARLERVAKAAVEINGIVIPKDMVVMIPTWPLHRDPEIWPEPEAFKPERFSKKNKDNIDPYIYMPFGSGPRNCIGMRFALVLIKLAVVEILQQYSFSVCKETEVPFEMDIQGLLAPKRPIQLKLVPRS</sequence>
<proteinExistence type="evidence at transcript level"/>
<name>C356_FUNHE</name>
<organism evidence="4">
    <name type="scientific">Fundulus heteroclitus</name>
    <name type="common">Killifish</name>
    <name type="synonym">Mummichog</name>
    <dbReference type="NCBI Taxonomy" id="8078"/>
    <lineage>
        <taxon>Eukaryota</taxon>
        <taxon>Metazoa</taxon>
        <taxon>Chordata</taxon>
        <taxon>Craniata</taxon>
        <taxon>Vertebrata</taxon>
        <taxon>Euteleostomi</taxon>
        <taxon>Actinopterygii</taxon>
        <taxon>Neopterygii</taxon>
        <taxon>Teleostei</taxon>
        <taxon>Neoteleostei</taxon>
        <taxon>Acanthomorphata</taxon>
        <taxon>Ovalentaria</taxon>
        <taxon>Atherinomorphae</taxon>
        <taxon>Cyprinodontiformes</taxon>
        <taxon>Fundulidae</taxon>
        <taxon>Fundulus</taxon>
    </lineage>
</organism>
<feature type="chain" id="PRO_0000051810" description="Cytochrome P450 3A56">
    <location>
        <begin position="1"/>
        <end position="496"/>
    </location>
</feature>
<feature type="binding site" description="axial binding residue" evidence="1">
    <location>
        <position position="441"/>
    </location>
    <ligand>
        <name>heme</name>
        <dbReference type="ChEBI" id="CHEBI:30413"/>
    </ligand>
    <ligandPart>
        <name>Fe</name>
        <dbReference type="ChEBI" id="CHEBI:18248"/>
    </ligandPart>
</feature>
<comment type="function">
    <text>Putative steroid 6-beta-hydroxylase.</text>
</comment>
<comment type="catalytic activity">
    <reaction>
        <text>an organic molecule + reduced [NADPH--hemoprotein reductase] + O2 = an alcohol + oxidized [NADPH--hemoprotein reductase] + H2O + H(+)</text>
        <dbReference type="Rhea" id="RHEA:17149"/>
        <dbReference type="Rhea" id="RHEA-COMP:11964"/>
        <dbReference type="Rhea" id="RHEA-COMP:11965"/>
        <dbReference type="ChEBI" id="CHEBI:15377"/>
        <dbReference type="ChEBI" id="CHEBI:15378"/>
        <dbReference type="ChEBI" id="CHEBI:15379"/>
        <dbReference type="ChEBI" id="CHEBI:30879"/>
        <dbReference type="ChEBI" id="CHEBI:57618"/>
        <dbReference type="ChEBI" id="CHEBI:58210"/>
        <dbReference type="ChEBI" id="CHEBI:142491"/>
        <dbReference type="EC" id="1.14.14.1"/>
    </reaction>
</comment>
<comment type="cofactor">
    <cofactor evidence="1">
        <name>heme</name>
        <dbReference type="ChEBI" id="CHEBI:30413"/>
    </cofactor>
</comment>
<comment type="subcellular location">
    <subcellularLocation>
        <location evidence="3">Endoplasmic reticulum membrane</location>
        <topology evidence="3">Peripheral membrane protein</topology>
    </subcellularLocation>
    <subcellularLocation>
        <location evidence="3">Microsome membrane</location>
        <topology evidence="3">Peripheral membrane protein</topology>
    </subcellularLocation>
</comment>
<comment type="tissue specificity">
    <text evidence="2">Highly expressed in liver and intestine. Moderate expression in gill and spleen. Low expression in kidney, brain and heart.</text>
</comment>
<comment type="similarity">
    <text evidence="3">Belongs to the cytochrome P450 family.</text>
</comment>
<comment type="caution">
    <text evidence="3">Due to a recent gene duplication event, CYP3A30 and CYP3A56 are very similar. Because of this it was not possible to distinguish between the two genes when measuring the tissue expression.</text>
</comment>
<dbReference type="EC" id="1.14.14.1"/>
<dbReference type="EMBL" id="AY143428">
    <property type="protein sequence ID" value="AAN38837.1"/>
    <property type="molecule type" value="mRNA"/>
</dbReference>
<dbReference type="RefSeq" id="NP_001296866.1">
    <property type="nucleotide sequence ID" value="NM_001309937.1"/>
</dbReference>
<dbReference type="SMR" id="Q8AXY5"/>
<dbReference type="STRING" id="8078.ENSFHEP00000011598"/>
<dbReference type="GeneID" id="105940029"/>
<dbReference type="OrthoDB" id="1470350at2759"/>
<dbReference type="Proteomes" id="UP000265000">
    <property type="component" value="Whole Genome Shotgun Assembly"/>
</dbReference>
<dbReference type="GO" id="GO:0005789">
    <property type="term" value="C:endoplasmic reticulum membrane"/>
    <property type="evidence" value="ECO:0007669"/>
    <property type="project" value="UniProtKB-SubCell"/>
</dbReference>
<dbReference type="GO" id="GO:0020037">
    <property type="term" value="F:heme binding"/>
    <property type="evidence" value="ECO:0007669"/>
    <property type="project" value="InterPro"/>
</dbReference>
<dbReference type="GO" id="GO:0005506">
    <property type="term" value="F:iron ion binding"/>
    <property type="evidence" value="ECO:0007669"/>
    <property type="project" value="InterPro"/>
</dbReference>
<dbReference type="GO" id="GO:0016712">
    <property type="term" value="F:oxidoreductase activity, acting on paired donors, with incorporation or reduction of molecular oxygen, reduced flavin or flavoprotein as one donor, and incorporation of one atom of oxygen"/>
    <property type="evidence" value="ECO:0007669"/>
    <property type="project" value="UniProtKB-EC"/>
</dbReference>
<dbReference type="GO" id="GO:0008395">
    <property type="term" value="F:steroid hydroxylase activity"/>
    <property type="evidence" value="ECO:0007669"/>
    <property type="project" value="TreeGrafter"/>
</dbReference>
<dbReference type="CDD" id="cd20650">
    <property type="entry name" value="CYP3A"/>
    <property type="match status" value="1"/>
</dbReference>
<dbReference type="FunFam" id="1.10.630.10:FF:000003">
    <property type="entry name" value="cytochrome P450 3A12-like isoform X2"/>
    <property type="match status" value="1"/>
</dbReference>
<dbReference type="Gene3D" id="1.10.630.10">
    <property type="entry name" value="Cytochrome P450"/>
    <property type="match status" value="1"/>
</dbReference>
<dbReference type="InterPro" id="IPR001128">
    <property type="entry name" value="Cyt_P450"/>
</dbReference>
<dbReference type="InterPro" id="IPR017972">
    <property type="entry name" value="Cyt_P450_CS"/>
</dbReference>
<dbReference type="InterPro" id="IPR008072">
    <property type="entry name" value="Cyt_P450_E_CYP3A"/>
</dbReference>
<dbReference type="InterPro" id="IPR002402">
    <property type="entry name" value="Cyt_P450_E_grp-II"/>
</dbReference>
<dbReference type="InterPro" id="IPR036396">
    <property type="entry name" value="Cyt_P450_sf"/>
</dbReference>
<dbReference type="InterPro" id="IPR050705">
    <property type="entry name" value="Cytochrome_P450_3A"/>
</dbReference>
<dbReference type="PANTHER" id="PTHR24302">
    <property type="entry name" value="CYTOCHROME P450 FAMILY 3"/>
    <property type="match status" value="1"/>
</dbReference>
<dbReference type="PANTHER" id="PTHR24302:SF32">
    <property type="entry name" value="CYTOCHROME P450, FAMILY 3, SUBFAMILY A, POLYPEPTIDE 65"/>
    <property type="match status" value="1"/>
</dbReference>
<dbReference type="Pfam" id="PF00067">
    <property type="entry name" value="p450"/>
    <property type="match status" value="1"/>
</dbReference>
<dbReference type="PRINTS" id="PR00464">
    <property type="entry name" value="EP450II"/>
</dbReference>
<dbReference type="PRINTS" id="PR01689">
    <property type="entry name" value="EP450IICYP3A"/>
</dbReference>
<dbReference type="PRINTS" id="PR00385">
    <property type="entry name" value="P450"/>
</dbReference>
<dbReference type="SUPFAM" id="SSF48264">
    <property type="entry name" value="Cytochrome P450"/>
    <property type="match status" value="1"/>
</dbReference>
<dbReference type="PROSITE" id="PS00086">
    <property type="entry name" value="CYTOCHROME_P450"/>
    <property type="match status" value="1"/>
</dbReference>
<evidence type="ECO:0000250" key="1"/>
<evidence type="ECO:0000269" key="2">
    <source>
    </source>
</evidence>
<evidence type="ECO:0000305" key="3"/>
<evidence type="ECO:0000312" key="4">
    <source>
        <dbReference type="EMBL" id="AAN38837.1"/>
    </source>
</evidence>
<keyword id="KW-0256">Endoplasmic reticulum</keyword>
<keyword id="KW-0349">Heme</keyword>
<keyword id="KW-0408">Iron</keyword>
<keyword id="KW-0472">Membrane</keyword>
<keyword id="KW-0479">Metal-binding</keyword>
<keyword id="KW-0492">Microsome</keyword>
<keyword id="KW-0503">Monooxygenase</keyword>
<keyword id="KW-0560">Oxidoreductase</keyword>
<reference key="1">
    <citation type="journal article" date="2003" name="Aquat. Toxicol.">
        <title>Hepatic versus extrahepatic expression of CYP3A30 and CYP3A56 in adult killifish (Fundulus heteroclitus).</title>
        <authorList>
            <person name="Hegelund T."/>
            <person name="Celander M.C."/>
        </authorList>
    </citation>
    <scope>NUCLEOTIDE SEQUENCE [MRNA]</scope>
    <scope>TISSUE SPECIFICITY</scope>
</reference>
<reference key="2">
    <citation type="journal article" date="1997" name="Biochem. Biophys. Res. Commun.">
        <title>Isolation of a cytochrome P450 3A cDNA sequence (CYP3A30) from the marine teleost Fundulus heteroclitus and phylogenetic analyses of CYP3A genes.</title>
        <authorList>
            <person name="Celander M.C."/>
            <person name="Stegeman J.J."/>
        </authorList>
    </citation>
    <scope>NUCLEOTIDE SEQUENCE [MRNA] OF 312-435</scope>
    <source>
        <tissue>Liver</tissue>
    </source>
</reference>
<accession>Q8AXY5</accession>
<gene>
    <name type="primary">cyp3a56</name>
</gene>